<gene>
    <name evidence="1" type="primary">allB</name>
    <name type="ordered locus">SeD_A0571</name>
</gene>
<feature type="chain" id="PRO_1000186927" description="Allantoinase">
    <location>
        <begin position="1"/>
        <end position="453"/>
    </location>
</feature>
<feature type="binding site" evidence="1">
    <location>
        <position position="59"/>
    </location>
    <ligand>
        <name>Zn(2+)</name>
        <dbReference type="ChEBI" id="CHEBI:29105"/>
        <label>1</label>
    </ligand>
</feature>
<feature type="binding site" evidence="1">
    <location>
        <position position="61"/>
    </location>
    <ligand>
        <name>Zn(2+)</name>
        <dbReference type="ChEBI" id="CHEBI:29105"/>
        <label>1</label>
    </ligand>
</feature>
<feature type="binding site" description="via carbamate group" evidence="1">
    <location>
        <position position="146"/>
    </location>
    <ligand>
        <name>Zn(2+)</name>
        <dbReference type="ChEBI" id="CHEBI:29105"/>
        <label>1</label>
    </ligand>
</feature>
<feature type="binding site" description="via carbamate group" evidence="1">
    <location>
        <position position="146"/>
    </location>
    <ligand>
        <name>Zn(2+)</name>
        <dbReference type="ChEBI" id="CHEBI:29105"/>
        <label>2</label>
    </ligand>
</feature>
<feature type="binding site" evidence="1">
    <location>
        <position position="186"/>
    </location>
    <ligand>
        <name>Zn(2+)</name>
        <dbReference type="ChEBI" id="CHEBI:29105"/>
        <label>2</label>
    </ligand>
</feature>
<feature type="binding site" evidence="1">
    <location>
        <position position="242"/>
    </location>
    <ligand>
        <name>Zn(2+)</name>
        <dbReference type="ChEBI" id="CHEBI:29105"/>
        <label>2</label>
    </ligand>
</feature>
<feature type="binding site" evidence="1">
    <location>
        <position position="315"/>
    </location>
    <ligand>
        <name>Zn(2+)</name>
        <dbReference type="ChEBI" id="CHEBI:29105"/>
        <label>1</label>
    </ligand>
</feature>
<feature type="modified residue" description="N6-carboxylysine" evidence="1">
    <location>
        <position position="146"/>
    </location>
</feature>
<reference key="1">
    <citation type="journal article" date="2011" name="J. Bacteriol.">
        <title>Comparative genomics of 28 Salmonella enterica isolates: evidence for CRISPR-mediated adaptive sublineage evolution.</title>
        <authorList>
            <person name="Fricke W.F."/>
            <person name="Mammel M.K."/>
            <person name="McDermott P.F."/>
            <person name="Tartera C."/>
            <person name="White D.G."/>
            <person name="Leclerc J.E."/>
            <person name="Ravel J."/>
            <person name="Cebula T.A."/>
        </authorList>
    </citation>
    <scope>NUCLEOTIDE SEQUENCE [LARGE SCALE GENOMIC DNA]</scope>
    <source>
        <strain>CT_02021853</strain>
    </source>
</reference>
<organism>
    <name type="scientific">Salmonella dublin (strain CT_02021853)</name>
    <dbReference type="NCBI Taxonomy" id="439851"/>
    <lineage>
        <taxon>Bacteria</taxon>
        <taxon>Pseudomonadati</taxon>
        <taxon>Pseudomonadota</taxon>
        <taxon>Gammaproteobacteria</taxon>
        <taxon>Enterobacterales</taxon>
        <taxon>Enterobacteriaceae</taxon>
        <taxon>Salmonella</taxon>
    </lineage>
</organism>
<name>ALLB_SALDC</name>
<comment type="function">
    <text evidence="1">Catalyzes the conversion of allantoin (5-ureidohydantoin) to allantoic acid by hydrolytic cleavage of the five-member hydantoin ring.</text>
</comment>
<comment type="catalytic activity">
    <reaction evidence="1">
        <text>(S)-allantoin + H2O = allantoate + H(+)</text>
        <dbReference type="Rhea" id="RHEA:17029"/>
        <dbReference type="ChEBI" id="CHEBI:15377"/>
        <dbReference type="ChEBI" id="CHEBI:15378"/>
        <dbReference type="ChEBI" id="CHEBI:15678"/>
        <dbReference type="ChEBI" id="CHEBI:17536"/>
        <dbReference type="EC" id="3.5.2.5"/>
    </reaction>
</comment>
<comment type="cofactor">
    <cofactor evidence="1">
        <name>Zn(2+)</name>
        <dbReference type="ChEBI" id="CHEBI:29105"/>
    </cofactor>
    <text evidence="1">Binds 2 Zn(2+) ions per subunit.</text>
</comment>
<comment type="pathway">
    <text evidence="1">Nitrogen metabolism; (S)-allantoin degradation; allantoate from (S)-allantoin: step 1/1.</text>
</comment>
<comment type="subunit">
    <text evidence="1">Homotetramer.</text>
</comment>
<comment type="PTM">
    <text evidence="1">Carboxylation allows a single lysine to coordinate two zinc ions.</text>
</comment>
<comment type="similarity">
    <text evidence="1">Belongs to the metallo-dependent hydrolases superfamily. Allantoinase family.</text>
</comment>
<keyword id="KW-0378">Hydrolase</keyword>
<keyword id="KW-0479">Metal-binding</keyword>
<keyword id="KW-0659">Purine metabolism</keyword>
<keyword id="KW-0862">Zinc</keyword>
<evidence type="ECO:0000255" key="1">
    <source>
        <dbReference type="HAMAP-Rule" id="MF_01645"/>
    </source>
</evidence>
<protein>
    <recommendedName>
        <fullName evidence="1">Allantoinase</fullName>
        <ecNumber evidence="1">3.5.2.5</ecNumber>
    </recommendedName>
    <alternativeName>
        <fullName evidence="1">Allantoin-utilizing enzyme</fullName>
    </alternativeName>
</protein>
<sequence>MSFDLIIKNGTVILENEARVIDIAVQGGKIAAIGENLGEAKNVLDATGLIVSPGMVDAHTHISEPGRTHWEGYETGTRAAAKGGITTMIEMPLNQLPATVDRETIELKFDAAKGKLTIDAAQLGGLVSYNLDRLHELDEVGVVGFKCFVATCGDRGIDNDFRDVNDWQFYKGAQKLGEMDQTVLVHCENALICDELGEEAKREGRVTAHDYVASRPVFTEVEAIRRVLYLAKAAGCRLHVCHISSPEGVEEVTRARQEGQDVTCESCPHYFVLDTDQFEEIGTLAKCSPPIRDQENQKGMWEKLFNGEIDCLVSDHSPCPPEMKAGNIMQAWGGIAGLQNCMDVMFDEAVQKRGMSLPMFGKLMATNAADIFGLKHKGRIAPGKDADLVFIQPDSSYVLKNEDLEYRHKVSPYVGRTIGARITKTILRGDVIYDIEHGFPVPPKGQFILKHQQ</sequence>
<dbReference type="EC" id="3.5.2.5" evidence="1"/>
<dbReference type="EMBL" id="CP001144">
    <property type="protein sequence ID" value="ACH74684.1"/>
    <property type="molecule type" value="Genomic_DNA"/>
</dbReference>
<dbReference type="RefSeq" id="WP_000006865.1">
    <property type="nucleotide sequence ID" value="NC_011205.1"/>
</dbReference>
<dbReference type="SMR" id="B5FLN3"/>
<dbReference type="KEGG" id="sed:SeD_A0571"/>
<dbReference type="HOGENOM" id="CLU_015572_4_2_6"/>
<dbReference type="UniPathway" id="UPA00395">
    <property type="reaction ID" value="UER00653"/>
</dbReference>
<dbReference type="Proteomes" id="UP000008322">
    <property type="component" value="Chromosome"/>
</dbReference>
<dbReference type="GO" id="GO:0005737">
    <property type="term" value="C:cytoplasm"/>
    <property type="evidence" value="ECO:0007669"/>
    <property type="project" value="TreeGrafter"/>
</dbReference>
<dbReference type="GO" id="GO:0004038">
    <property type="term" value="F:allantoinase activity"/>
    <property type="evidence" value="ECO:0007669"/>
    <property type="project" value="UniProtKB-UniRule"/>
</dbReference>
<dbReference type="GO" id="GO:0050897">
    <property type="term" value="F:cobalt ion binding"/>
    <property type="evidence" value="ECO:0007669"/>
    <property type="project" value="InterPro"/>
</dbReference>
<dbReference type="GO" id="GO:0008270">
    <property type="term" value="F:zinc ion binding"/>
    <property type="evidence" value="ECO:0007669"/>
    <property type="project" value="InterPro"/>
</dbReference>
<dbReference type="GO" id="GO:0000256">
    <property type="term" value="P:allantoin catabolic process"/>
    <property type="evidence" value="ECO:0007669"/>
    <property type="project" value="UniProtKB-UniRule"/>
</dbReference>
<dbReference type="GO" id="GO:0006145">
    <property type="term" value="P:purine nucleobase catabolic process"/>
    <property type="evidence" value="ECO:0007669"/>
    <property type="project" value="TreeGrafter"/>
</dbReference>
<dbReference type="CDD" id="cd01315">
    <property type="entry name" value="L-HYD_ALN"/>
    <property type="match status" value="1"/>
</dbReference>
<dbReference type="FunFam" id="3.20.20.140:FF:000013">
    <property type="entry name" value="Allantoinase"/>
    <property type="match status" value="1"/>
</dbReference>
<dbReference type="Gene3D" id="3.20.20.140">
    <property type="entry name" value="Metal-dependent hydrolases"/>
    <property type="match status" value="1"/>
</dbReference>
<dbReference type="HAMAP" id="MF_01645">
    <property type="entry name" value="Hydantoinase"/>
    <property type="match status" value="1"/>
</dbReference>
<dbReference type="InterPro" id="IPR017593">
    <property type="entry name" value="Allantoinase"/>
</dbReference>
<dbReference type="InterPro" id="IPR047604">
    <property type="entry name" value="Allantoinase_bact"/>
</dbReference>
<dbReference type="InterPro" id="IPR006680">
    <property type="entry name" value="Amidohydro-rel"/>
</dbReference>
<dbReference type="InterPro" id="IPR050138">
    <property type="entry name" value="DHOase/Allantoinase_Hydrolase"/>
</dbReference>
<dbReference type="InterPro" id="IPR011059">
    <property type="entry name" value="Metal-dep_hydrolase_composite"/>
</dbReference>
<dbReference type="InterPro" id="IPR032466">
    <property type="entry name" value="Metal_Hydrolase"/>
</dbReference>
<dbReference type="NCBIfam" id="TIGR03178">
    <property type="entry name" value="allantoinase"/>
    <property type="match status" value="1"/>
</dbReference>
<dbReference type="NCBIfam" id="NF005960">
    <property type="entry name" value="PRK08044.1"/>
    <property type="match status" value="1"/>
</dbReference>
<dbReference type="PANTHER" id="PTHR43668">
    <property type="entry name" value="ALLANTOINASE"/>
    <property type="match status" value="1"/>
</dbReference>
<dbReference type="PANTHER" id="PTHR43668:SF4">
    <property type="entry name" value="ALLANTOINASE"/>
    <property type="match status" value="1"/>
</dbReference>
<dbReference type="Pfam" id="PF01979">
    <property type="entry name" value="Amidohydro_1"/>
    <property type="match status" value="1"/>
</dbReference>
<dbReference type="SUPFAM" id="SSF51338">
    <property type="entry name" value="Composite domain of metallo-dependent hydrolases"/>
    <property type="match status" value="1"/>
</dbReference>
<dbReference type="SUPFAM" id="SSF51556">
    <property type="entry name" value="Metallo-dependent hydrolases"/>
    <property type="match status" value="1"/>
</dbReference>
<accession>B5FLN3</accession>
<proteinExistence type="inferred from homology"/>